<name>NUOB_BRUSU</name>
<protein>
    <recommendedName>
        <fullName evidence="2">NADH-quinone oxidoreductase subunit B</fullName>
        <ecNumber evidence="2">7.1.1.-</ecNumber>
    </recommendedName>
    <alternativeName>
        <fullName evidence="2">NADH dehydrogenase I subunit B</fullName>
    </alternativeName>
    <alternativeName>
        <fullName evidence="2">NDH-1 subunit B</fullName>
    </alternativeName>
</protein>
<keyword id="KW-0004">4Fe-4S</keyword>
<keyword id="KW-0997">Cell inner membrane</keyword>
<keyword id="KW-1003">Cell membrane</keyword>
<keyword id="KW-0408">Iron</keyword>
<keyword id="KW-0411">Iron-sulfur</keyword>
<keyword id="KW-0472">Membrane</keyword>
<keyword id="KW-0479">Metal-binding</keyword>
<keyword id="KW-0520">NAD</keyword>
<keyword id="KW-0874">Quinone</keyword>
<keyword id="KW-1278">Translocase</keyword>
<keyword id="KW-0813">Transport</keyword>
<keyword id="KW-0830">Ubiquinone</keyword>
<gene>
    <name evidence="2" type="primary">nuoB</name>
    <name type="ordered locus">BR0803</name>
    <name type="ordered locus">BS1330_I0799</name>
</gene>
<organism>
    <name type="scientific">Brucella suis biovar 1 (strain 1330)</name>
    <dbReference type="NCBI Taxonomy" id="204722"/>
    <lineage>
        <taxon>Bacteria</taxon>
        <taxon>Pseudomonadati</taxon>
        <taxon>Pseudomonadota</taxon>
        <taxon>Alphaproteobacteria</taxon>
        <taxon>Hyphomicrobiales</taxon>
        <taxon>Brucellaceae</taxon>
        <taxon>Brucella/Ochrobactrum group</taxon>
        <taxon>Brucella</taxon>
    </lineage>
</organism>
<feature type="chain" id="PRO_0000358361" description="NADH-quinone oxidoreductase subunit B">
    <location>
        <begin position="1"/>
        <end position="193"/>
    </location>
</feature>
<feature type="region of interest" description="Disordered" evidence="3">
    <location>
        <begin position="1"/>
        <end position="23"/>
    </location>
</feature>
<feature type="compositionally biased region" description="Polar residues" evidence="3">
    <location>
        <begin position="1"/>
        <end position="11"/>
    </location>
</feature>
<feature type="binding site" evidence="2">
    <location>
        <position position="72"/>
    </location>
    <ligand>
        <name>[4Fe-4S] cluster</name>
        <dbReference type="ChEBI" id="CHEBI:49883"/>
    </ligand>
</feature>
<feature type="binding site" evidence="2">
    <location>
        <position position="73"/>
    </location>
    <ligand>
        <name>[4Fe-4S] cluster</name>
        <dbReference type="ChEBI" id="CHEBI:49883"/>
    </ligand>
</feature>
<feature type="binding site" evidence="2">
    <location>
        <position position="137"/>
    </location>
    <ligand>
        <name>[4Fe-4S] cluster</name>
        <dbReference type="ChEBI" id="CHEBI:49883"/>
    </ligand>
</feature>
<feature type="binding site" evidence="2">
    <location>
        <position position="167"/>
    </location>
    <ligand>
        <name>[4Fe-4S] cluster</name>
        <dbReference type="ChEBI" id="CHEBI:49883"/>
    </ligand>
</feature>
<proteinExistence type="inferred from homology"/>
<evidence type="ECO:0000250" key="1"/>
<evidence type="ECO:0000255" key="2">
    <source>
        <dbReference type="HAMAP-Rule" id="MF_01356"/>
    </source>
</evidence>
<evidence type="ECO:0000256" key="3">
    <source>
        <dbReference type="SAM" id="MobiDB-lite"/>
    </source>
</evidence>
<comment type="function">
    <text evidence="1">NDH-1 shuttles electrons from NADH, via FMN and iron-sulfur (Fe-S) centers, to quinones in the respiratory chain. Couples the redox reaction to proton translocation (for every two electrons transferred, four hydrogen ions are translocated across the cytoplasmic membrane), and thus conserves the redox energy in a proton gradient (By similarity).</text>
</comment>
<comment type="catalytic activity">
    <reaction evidence="2">
        <text>a quinone + NADH + 5 H(+)(in) = a quinol + NAD(+) + 4 H(+)(out)</text>
        <dbReference type="Rhea" id="RHEA:57888"/>
        <dbReference type="ChEBI" id="CHEBI:15378"/>
        <dbReference type="ChEBI" id="CHEBI:24646"/>
        <dbReference type="ChEBI" id="CHEBI:57540"/>
        <dbReference type="ChEBI" id="CHEBI:57945"/>
        <dbReference type="ChEBI" id="CHEBI:132124"/>
    </reaction>
</comment>
<comment type="cofactor">
    <cofactor evidence="2">
        <name>[4Fe-4S] cluster</name>
        <dbReference type="ChEBI" id="CHEBI:49883"/>
    </cofactor>
    <text evidence="2">Binds 1 [4Fe-4S] cluster.</text>
</comment>
<comment type="subunit">
    <text evidence="2">NDH-1 is composed of 14 different subunits. Subunits NuoB, C, D, E, F, and G constitute the peripheral sector of the complex.</text>
</comment>
<comment type="subcellular location">
    <subcellularLocation>
        <location evidence="2">Cell inner membrane</location>
        <topology evidence="2">Peripheral membrane protein</topology>
        <orientation evidence="2">Cytoplasmic side</orientation>
    </subcellularLocation>
</comment>
<comment type="similarity">
    <text evidence="2">Belongs to the complex I 20 kDa subunit family.</text>
</comment>
<dbReference type="EC" id="7.1.1.-" evidence="2"/>
<dbReference type="EMBL" id="AE014291">
    <property type="protein sequence ID" value="AAN29732.1"/>
    <property type="molecule type" value="Genomic_DNA"/>
</dbReference>
<dbReference type="EMBL" id="CP002997">
    <property type="protein sequence ID" value="AEM18149.1"/>
    <property type="molecule type" value="Genomic_DNA"/>
</dbReference>
<dbReference type="RefSeq" id="WP_002967573.1">
    <property type="nucleotide sequence ID" value="NZ_KN046804.1"/>
</dbReference>
<dbReference type="SMR" id="Q8G1B6"/>
<dbReference type="KEGG" id="bms:BR0803"/>
<dbReference type="KEGG" id="bsi:BS1330_I0799"/>
<dbReference type="PATRIC" id="fig|204722.21.peg.1626"/>
<dbReference type="HOGENOM" id="CLU_055737_7_3_5"/>
<dbReference type="PhylomeDB" id="Q8G1B6"/>
<dbReference type="Proteomes" id="UP000007104">
    <property type="component" value="Chromosome I"/>
</dbReference>
<dbReference type="GO" id="GO:0005886">
    <property type="term" value="C:plasma membrane"/>
    <property type="evidence" value="ECO:0007669"/>
    <property type="project" value="UniProtKB-SubCell"/>
</dbReference>
<dbReference type="GO" id="GO:0045271">
    <property type="term" value="C:respiratory chain complex I"/>
    <property type="evidence" value="ECO:0007669"/>
    <property type="project" value="TreeGrafter"/>
</dbReference>
<dbReference type="GO" id="GO:0051539">
    <property type="term" value="F:4 iron, 4 sulfur cluster binding"/>
    <property type="evidence" value="ECO:0007669"/>
    <property type="project" value="UniProtKB-KW"/>
</dbReference>
<dbReference type="GO" id="GO:0005506">
    <property type="term" value="F:iron ion binding"/>
    <property type="evidence" value="ECO:0007669"/>
    <property type="project" value="UniProtKB-UniRule"/>
</dbReference>
<dbReference type="GO" id="GO:0008137">
    <property type="term" value="F:NADH dehydrogenase (ubiquinone) activity"/>
    <property type="evidence" value="ECO:0007669"/>
    <property type="project" value="InterPro"/>
</dbReference>
<dbReference type="GO" id="GO:0050136">
    <property type="term" value="F:NADH:ubiquinone reductase (non-electrogenic) activity"/>
    <property type="evidence" value="ECO:0007669"/>
    <property type="project" value="UniProtKB-UniRule"/>
</dbReference>
<dbReference type="GO" id="GO:0048038">
    <property type="term" value="F:quinone binding"/>
    <property type="evidence" value="ECO:0007669"/>
    <property type="project" value="UniProtKB-KW"/>
</dbReference>
<dbReference type="GO" id="GO:0009060">
    <property type="term" value="P:aerobic respiration"/>
    <property type="evidence" value="ECO:0007669"/>
    <property type="project" value="TreeGrafter"/>
</dbReference>
<dbReference type="GO" id="GO:0015990">
    <property type="term" value="P:electron transport coupled proton transport"/>
    <property type="evidence" value="ECO:0007669"/>
    <property type="project" value="TreeGrafter"/>
</dbReference>
<dbReference type="FunFam" id="3.40.50.12280:FF:000001">
    <property type="entry name" value="NADH-quinone oxidoreductase subunit B 2"/>
    <property type="match status" value="1"/>
</dbReference>
<dbReference type="Gene3D" id="3.40.50.12280">
    <property type="match status" value="1"/>
</dbReference>
<dbReference type="HAMAP" id="MF_01356">
    <property type="entry name" value="NDH1_NuoB"/>
    <property type="match status" value="1"/>
</dbReference>
<dbReference type="InterPro" id="IPR006137">
    <property type="entry name" value="NADH_UbQ_OxRdtase-like_20kDa"/>
</dbReference>
<dbReference type="InterPro" id="IPR006138">
    <property type="entry name" value="NADH_UQ_OxRdtase_20Kd_su"/>
</dbReference>
<dbReference type="NCBIfam" id="TIGR01957">
    <property type="entry name" value="nuoB_fam"/>
    <property type="match status" value="1"/>
</dbReference>
<dbReference type="NCBIfam" id="NF005012">
    <property type="entry name" value="PRK06411.1"/>
    <property type="match status" value="1"/>
</dbReference>
<dbReference type="PANTHER" id="PTHR11995">
    <property type="entry name" value="NADH DEHYDROGENASE"/>
    <property type="match status" value="1"/>
</dbReference>
<dbReference type="PANTHER" id="PTHR11995:SF14">
    <property type="entry name" value="NADH DEHYDROGENASE [UBIQUINONE] IRON-SULFUR PROTEIN 7, MITOCHONDRIAL"/>
    <property type="match status" value="1"/>
</dbReference>
<dbReference type="Pfam" id="PF01058">
    <property type="entry name" value="Oxidored_q6"/>
    <property type="match status" value="1"/>
</dbReference>
<dbReference type="SUPFAM" id="SSF56770">
    <property type="entry name" value="HydA/Nqo6-like"/>
    <property type="match status" value="1"/>
</dbReference>
<dbReference type="PROSITE" id="PS01150">
    <property type="entry name" value="COMPLEX1_20K"/>
    <property type="match status" value="1"/>
</dbReference>
<accession>Q8G1B6</accession>
<accession>G0K8V1</accession>
<reference key="1">
    <citation type="journal article" date="2002" name="Proc. Natl. Acad. Sci. U.S.A.">
        <title>The Brucella suis genome reveals fundamental similarities between animal and plant pathogens and symbionts.</title>
        <authorList>
            <person name="Paulsen I.T."/>
            <person name="Seshadri R."/>
            <person name="Nelson K.E."/>
            <person name="Eisen J.A."/>
            <person name="Heidelberg J.F."/>
            <person name="Read T.D."/>
            <person name="Dodson R.J."/>
            <person name="Umayam L.A."/>
            <person name="Brinkac L.M."/>
            <person name="Beanan M.J."/>
            <person name="Daugherty S.C."/>
            <person name="DeBoy R.T."/>
            <person name="Durkin A.S."/>
            <person name="Kolonay J.F."/>
            <person name="Madupu R."/>
            <person name="Nelson W.C."/>
            <person name="Ayodeji B."/>
            <person name="Kraul M."/>
            <person name="Shetty J."/>
            <person name="Malek J.A."/>
            <person name="Van Aken S.E."/>
            <person name="Riedmuller S."/>
            <person name="Tettelin H."/>
            <person name="Gill S.R."/>
            <person name="White O."/>
            <person name="Salzberg S.L."/>
            <person name="Hoover D.L."/>
            <person name="Lindler L.E."/>
            <person name="Halling S.M."/>
            <person name="Boyle S.M."/>
            <person name="Fraser C.M."/>
        </authorList>
    </citation>
    <scope>NUCLEOTIDE SEQUENCE [LARGE SCALE GENOMIC DNA]</scope>
    <source>
        <strain>1330</strain>
    </source>
</reference>
<reference key="2">
    <citation type="journal article" date="2011" name="J. Bacteriol.">
        <title>Revised genome sequence of Brucella suis 1330.</title>
        <authorList>
            <person name="Tae H."/>
            <person name="Shallom S."/>
            <person name="Settlage R."/>
            <person name="Preston D."/>
            <person name="Adams L.G."/>
            <person name="Garner H.R."/>
        </authorList>
    </citation>
    <scope>NUCLEOTIDE SEQUENCE [LARGE SCALE GENOMIC DNA]</scope>
    <source>
        <strain>1330</strain>
    </source>
</reference>
<sequence>MGLTGTNTTLVAPQPKGILDPRTGKPVGSDDAFFNDLNGELSDKGFIVTSADALITWARTGSLMWMTFGLACCAVEMMHISMPRYDAERFGIAPRASPRQSDVMIVAGTLTNKMAPALRKVYDQMPEPRYVISMGSCANGGGYYHYSYSVVRGCDRVVPVDIYVPGCPPTAEALLYGILLLQKKIRRTGTIER</sequence>